<dbReference type="EMBL" id="CP000262">
    <property type="protein sequence ID" value="ABF37005.1"/>
    <property type="molecule type" value="Genomic_DNA"/>
</dbReference>
<dbReference type="SMR" id="Q1J906"/>
<dbReference type="KEGG" id="spi:MGAS10750_Spy0055"/>
<dbReference type="HOGENOM" id="CLU_158491_5_2_9"/>
<dbReference type="Proteomes" id="UP000002434">
    <property type="component" value="Chromosome"/>
</dbReference>
<dbReference type="GO" id="GO:0022625">
    <property type="term" value="C:cytosolic large ribosomal subunit"/>
    <property type="evidence" value="ECO:0007669"/>
    <property type="project" value="TreeGrafter"/>
</dbReference>
<dbReference type="GO" id="GO:0003735">
    <property type="term" value="F:structural constituent of ribosome"/>
    <property type="evidence" value="ECO:0007669"/>
    <property type="project" value="InterPro"/>
</dbReference>
<dbReference type="GO" id="GO:0006412">
    <property type="term" value="P:translation"/>
    <property type="evidence" value="ECO:0007669"/>
    <property type="project" value="UniProtKB-UniRule"/>
</dbReference>
<dbReference type="CDD" id="cd00427">
    <property type="entry name" value="Ribosomal_L29_HIP"/>
    <property type="match status" value="1"/>
</dbReference>
<dbReference type="FunFam" id="1.10.287.310:FF:000001">
    <property type="entry name" value="50S ribosomal protein L29"/>
    <property type="match status" value="1"/>
</dbReference>
<dbReference type="Gene3D" id="1.10.287.310">
    <property type="match status" value="1"/>
</dbReference>
<dbReference type="HAMAP" id="MF_00374">
    <property type="entry name" value="Ribosomal_uL29"/>
    <property type="match status" value="1"/>
</dbReference>
<dbReference type="InterPro" id="IPR050063">
    <property type="entry name" value="Ribosomal_protein_uL29"/>
</dbReference>
<dbReference type="InterPro" id="IPR001854">
    <property type="entry name" value="Ribosomal_uL29"/>
</dbReference>
<dbReference type="InterPro" id="IPR018254">
    <property type="entry name" value="Ribosomal_uL29_CS"/>
</dbReference>
<dbReference type="InterPro" id="IPR036049">
    <property type="entry name" value="Ribosomal_uL29_sf"/>
</dbReference>
<dbReference type="NCBIfam" id="TIGR00012">
    <property type="entry name" value="L29"/>
    <property type="match status" value="1"/>
</dbReference>
<dbReference type="PANTHER" id="PTHR10916">
    <property type="entry name" value="60S RIBOSOMAL PROTEIN L35/50S RIBOSOMAL PROTEIN L29"/>
    <property type="match status" value="1"/>
</dbReference>
<dbReference type="PANTHER" id="PTHR10916:SF0">
    <property type="entry name" value="LARGE RIBOSOMAL SUBUNIT PROTEIN UL29C"/>
    <property type="match status" value="1"/>
</dbReference>
<dbReference type="Pfam" id="PF00831">
    <property type="entry name" value="Ribosomal_L29"/>
    <property type="match status" value="1"/>
</dbReference>
<dbReference type="SUPFAM" id="SSF46561">
    <property type="entry name" value="Ribosomal protein L29 (L29p)"/>
    <property type="match status" value="1"/>
</dbReference>
<dbReference type="PROSITE" id="PS00579">
    <property type="entry name" value="RIBOSOMAL_L29"/>
    <property type="match status" value="1"/>
</dbReference>
<comment type="similarity">
    <text evidence="1">Belongs to the universal ribosomal protein uL29 family.</text>
</comment>
<feature type="chain" id="PRO_1000007627" description="Large ribosomal subunit protein uL29">
    <location>
        <begin position="1"/>
        <end position="68"/>
    </location>
</feature>
<gene>
    <name evidence="1" type="primary">rpmC</name>
    <name type="ordered locus">MGAS10750_Spy0055</name>
</gene>
<proteinExistence type="inferred from homology"/>
<evidence type="ECO:0000255" key="1">
    <source>
        <dbReference type="HAMAP-Rule" id="MF_00374"/>
    </source>
</evidence>
<evidence type="ECO:0000305" key="2"/>
<organism>
    <name type="scientific">Streptococcus pyogenes serotype M4 (strain MGAS10750)</name>
    <dbReference type="NCBI Taxonomy" id="370554"/>
    <lineage>
        <taxon>Bacteria</taxon>
        <taxon>Bacillati</taxon>
        <taxon>Bacillota</taxon>
        <taxon>Bacilli</taxon>
        <taxon>Lactobacillales</taxon>
        <taxon>Streptococcaceae</taxon>
        <taxon>Streptococcus</taxon>
    </lineage>
</organism>
<protein>
    <recommendedName>
        <fullName evidence="1">Large ribosomal subunit protein uL29</fullName>
    </recommendedName>
    <alternativeName>
        <fullName evidence="2">50S ribosomal protein L29</fullName>
    </alternativeName>
</protein>
<reference key="1">
    <citation type="journal article" date="2006" name="Proc. Natl. Acad. Sci. U.S.A.">
        <title>Molecular genetic anatomy of inter- and intraserotype variation in the human bacterial pathogen group A Streptococcus.</title>
        <authorList>
            <person name="Beres S.B."/>
            <person name="Richter E.W."/>
            <person name="Nagiec M.J."/>
            <person name="Sumby P."/>
            <person name="Porcella S.F."/>
            <person name="DeLeo F.R."/>
            <person name="Musser J.M."/>
        </authorList>
    </citation>
    <scope>NUCLEOTIDE SEQUENCE [LARGE SCALE GENOMIC DNA]</scope>
    <source>
        <strain>MGAS10750</strain>
    </source>
</reference>
<accession>Q1J906</accession>
<keyword id="KW-0687">Ribonucleoprotein</keyword>
<keyword id="KW-0689">Ribosomal protein</keyword>
<sequence>MKLQEIKDFVKELRGLSQEELAKKENELKKELFDLRFQAAAGQLEKTARLDEVKKQIARVKTVQSEMK</sequence>
<name>RL29_STRPF</name>